<comment type="function">
    <text evidence="1 8 10 12 13 16">Chromatin reader that recognizes and binds acetylated histones, thereby controlling gene expression and remodeling chromatin structures (PubMed:18406326, PubMed:22464331, PubMed:27105114, PubMed:32895492). Recruits transcription factors and coactivators to target gene sites, and activates RNA polymerase II machinery for transcriptional elongation (PubMed:29567837, PubMed:32895492). In vitro, binds acetylated lysine residues on the N-terminus of histone H2A, H2B, H3 and H4 (PubMed:18406326). Involved in endoderm differentiation via its association with long non-coding RNA (lncRNA) DIGIT: BRD3 undergoes liquid-liquid phase separation upon binding to lncRNA DIGIT, promoting binding to histone H3 acetylated at 'Lys-18' (H3K18ac) to induce endoderm gene expression (PubMed:32895492). Also binds non-histones acetylated proteins, such as GATA1 and GATA2: regulates transcription by promoting the binding of the transcription factor GATA1 to its targets (By similarity).</text>
</comment>
<comment type="activity regulation">
    <text evidence="9 14 15">Inhibited by JQ1, a thieno-triazolo-1,4-diazepine derivative, which specifically inhibits members of the BET family (BRD2, BRD3 and BRD4) (PubMed:20871596). The first bromo domain is inhibited by GSK778 (iBET-BD1), which specifically inhibits the first bromo domain of members of the BET family (BRD2, BRD3 and BRD4) (PubMed:32193360). The second bromo domain is inhibited by ABBV-744, which specifically inhibits the second bromo domain of members of the BET family (BRD2, BRD3 and BRD4) (PubMed:31969702). The second bromo domain is inhibited by GSK046 (iBET-BD2), which specifically inhibits the second bromo domain of members of the BET family (BRD2, BRD3 and BRD4) (PubMed:32193360).</text>
</comment>
<comment type="subunit">
    <text evidence="1 13 17">Interacts (via bromo domain 1) with GATA1 acetylated at 'Lys-312' and 'Lys-315' (By similarity). Interacts (via bromo domain 1) with GATA2 acetylated on lysine residues (By similarity). Interacts (via NET domain) with CHD4 (via KIKL motif) (PubMed:29567837). Interacts (via NET domain) with SMARCA4 (via KIKL motif) (PubMed:29567837). Interacts (via NET domain) with NSD3 (via KIKL motif) (PubMed:29567837, PubMed:33592170).</text>
</comment>
<comment type="subunit">
    <text evidence="17">(Microbial infection) Interacts with the Integrase protein of Moloney murine leukemia virus (MLV).</text>
</comment>
<comment type="interaction">
    <interactant intactId="EBI-1383460">
        <id>Q15059</id>
    </interactant>
    <interactant intactId="EBI-447544">
        <id>P01106</id>
        <label>MYC</label>
    </interactant>
    <organismsDiffer>false</organismsDiffer>
    <experiments>3</experiments>
</comment>
<comment type="interaction">
    <interactant intactId="EBI-13468085">
        <id>Q15059-2</id>
    </interactant>
    <interactant intactId="EBI-358297">
        <id>O00505</id>
        <label>KPNA3</label>
    </interactant>
    <organismsDiffer>false</organismsDiffer>
    <experiments>3</experiments>
</comment>
<comment type="subcellular location">
    <subcellularLocation>
        <location evidence="11">Nucleus</location>
    </subcellularLocation>
    <subcellularLocation>
        <location evidence="8">Chromosome</location>
    </subcellularLocation>
    <text evidence="8">Detected on chromatin.</text>
</comment>
<comment type="alternative products">
    <event type="alternative splicing"/>
    <isoform>
        <id>Q15059-1</id>
        <name>1</name>
        <sequence type="displayed"/>
    </isoform>
    <isoform>
        <id>Q15059-2</id>
        <name>2</name>
        <sequence type="described" ref="VSP_010247 VSP_010248"/>
    </isoform>
</comment>
<comment type="tissue specificity">
    <text evidence="18">Ubiquitous.</text>
</comment>
<comment type="domain">
    <text evidence="12">The Bromo domains specifically recognize and bind acetylated histones.</text>
</comment>
<comment type="domain">
    <text evidence="13">The NET domain recognizes and binds the 'KIKL' motif found in chromatin proteins.</text>
</comment>
<comment type="disease">
    <text evidence="7">A chromosomal aberration involving BRD3 is found in a rare, aggressive, and lethal carcinoma arising in midline organs of young people. Translocation t(15;9)(q14;q34) with NUTM1 which produces a BRD3-NUTM1 fusion protein.</text>
</comment>
<comment type="similarity">
    <text evidence="22">Belongs to the BET family.</text>
</comment>
<comment type="sequence caution" evidence="22">
    <conflict type="erroneous initiation">
        <sequence resource="EMBL-CDS" id="BAA05393"/>
    </conflict>
    <text>Extended N-terminus.</text>
</comment>
<name>BRD3_HUMAN</name>
<organism>
    <name type="scientific">Homo sapiens</name>
    <name type="common">Human</name>
    <dbReference type="NCBI Taxonomy" id="9606"/>
    <lineage>
        <taxon>Eukaryota</taxon>
        <taxon>Metazoa</taxon>
        <taxon>Chordata</taxon>
        <taxon>Craniata</taxon>
        <taxon>Vertebrata</taxon>
        <taxon>Euteleostomi</taxon>
        <taxon>Mammalia</taxon>
        <taxon>Eutheria</taxon>
        <taxon>Euarchontoglires</taxon>
        <taxon>Primates</taxon>
        <taxon>Haplorrhini</taxon>
        <taxon>Catarrhini</taxon>
        <taxon>Hominidae</taxon>
        <taxon>Homo</taxon>
    </lineage>
</organism>
<keyword id="KW-0002">3D-structure</keyword>
<keyword id="KW-0007">Acetylation</keyword>
<keyword id="KW-0025">Alternative splicing</keyword>
<keyword id="KW-0103">Bromodomain</keyword>
<keyword id="KW-0156">Chromatin regulator</keyword>
<keyword id="KW-0160">Chromosomal rearrangement</keyword>
<keyword id="KW-0158">Chromosome</keyword>
<keyword id="KW-0175">Coiled coil</keyword>
<keyword id="KW-1017">Isopeptide bond</keyword>
<keyword id="KW-0539">Nucleus</keyword>
<keyword id="KW-0597">Phosphoprotein</keyword>
<keyword id="KW-1267">Proteomics identification</keyword>
<keyword id="KW-1185">Reference proteome</keyword>
<keyword id="KW-0677">Repeat</keyword>
<keyword id="KW-0804">Transcription</keyword>
<keyword id="KW-0805">Transcription regulation</keyword>
<keyword id="KW-0832">Ubl conjugation</keyword>
<proteinExistence type="evidence at protein level"/>
<gene>
    <name evidence="20 23" type="primary">BRD3</name>
    <name evidence="21" type="synonym">KIAA0043</name>
    <name type="synonym">RING3L</name>
</gene>
<reference key="1">
    <citation type="journal article" date="1994" name="DNA Res.">
        <title>Prediction of the coding sequences of unidentified human genes. II. The coding sequences of 40 new genes (KIAA0041-KIAA0080) deduced by analysis of cDNA clones from human cell line KG-1.</title>
        <authorList>
            <person name="Nomura N."/>
            <person name="Nagase T."/>
            <person name="Miyajima N."/>
            <person name="Sazuka T."/>
            <person name="Tanaka A."/>
            <person name="Sato S."/>
            <person name="Seki N."/>
            <person name="Kawarabayasi Y."/>
            <person name="Ishikawa K."/>
            <person name="Tabata S."/>
        </authorList>
    </citation>
    <scope>NUCLEOTIDE SEQUENCE [LARGE SCALE MRNA] (ISOFORM 1)</scope>
    <source>
        <tissue>Bone marrow</tissue>
    </source>
</reference>
<reference key="2">
    <citation type="journal article" date="2005" name="DNA Cell Biol.">
        <title>Differentially expressed genes in endothelial differentiation.</title>
        <authorList>
            <person name="Ishii H."/>
            <person name="Mimori K."/>
            <person name="Mori M."/>
            <person name="Vecchione A."/>
        </authorList>
    </citation>
    <scope>NUCLEOTIDE SEQUENCE [MRNA]</scope>
</reference>
<reference key="3">
    <citation type="journal article" date="2004" name="Nature">
        <title>DNA sequence and analysis of human chromosome 9.</title>
        <authorList>
            <person name="Humphray S.J."/>
            <person name="Oliver K."/>
            <person name="Hunt A.R."/>
            <person name="Plumb R.W."/>
            <person name="Loveland J.E."/>
            <person name="Howe K.L."/>
            <person name="Andrews T.D."/>
            <person name="Searle S."/>
            <person name="Hunt S.E."/>
            <person name="Scott C.E."/>
            <person name="Jones M.C."/>
            <person name="Ainscough R."/>
            <person name="Almeida J.P."/>
            <person name="Ambrose K.D."/>
            <person name="Ashwell R.I.S."/>
            <person name="Babbage A.K."/>
            <person name="Babbage S."/>
            <person name="Bagguley C.L."/>
            <person name="Bailey J."/>
            <person name="Banerjee R."/>
            <person name="Barker D.J."/>
            <person name="Barlow K.F."/>
            <person name="Bates K."/>
            <person name="Beasley H."/>
            <person name="Beasley O."/>
            <person name="Bird C.P."/>
            <person name="Bray-Allen S."/>
            <person name="Brown A.J."/>
            <person name="Brown J.Y."/>
            <person name="Burford D."/>
            <person name="Burrill W."/>
            <person name="Burton J."/>
            <person name="Carder C."/>
            <person name="Carter N.P."/>
            <person name="Chapman J.C."/>
            <person name="Chen Y."/>
            <person name="Clarke G."/>
            <person name="Clark S.Y."/>
            <person name="Clee C.M."/>
            <person name="Clegg S."/>
            <person name="Collier R.E."/>
            <person name="Corby N."/>
            <person name="Crosier M."/>
            <person name="Cummings A.T."/>
            <person name="Davies J."/>
            <person name="Dhami P."/>
            <person name="Dunn M."/>
            <person name="Dutta I."/>
            <person name="Dyer L.W."/>
            <person name="Earthrowl M.E."/>
            <person name="Faulkner L."/>
            <person name="Fleming C.J."/>
            <person name="Frankish A."/>
            <person name="Frankland J.A."/>
            <person name="French L."/>
            <person name="Fricker D.G."/>
            <person name="Garner P."/>
            <person name="Garnett J."/>
            <person name="Ghori J."/>
            <person name="Gilbert J.G.R."/>
            <person name="Glison C."/>
            <person name="Grafham D.V."/>
            <person name="Gribble S."/>
            <person name="Griffiths C."/>
            <person name="Griffiths-Jones S."/>
            <person name="Grocock R."/>
            <person name="Guy J."/>
            <person name="Hall R.E."/>
            <person name="Hammond S."/>
            <person name="Harley J.L."/>
            <person name="Harrison E.S.I."/>
            <person name="Hart E.A."/>
            <person name="Heath P.D."/>
            <person name="Henderson C.D."/>
            <person name="Hopkins B.L."/>
            <person name="Howard P.J."/>
            <person name="Howden P.J."/>
            <person name="Huckle E."/>
            <person name="Johnson C."/>
            <person name="Johnson D."/>
            <person name="Joy A.A."/>
            <person name="Kay M."/>
            <person name="Keenan S."/>
            <person name="Kershaw J.K."/>
            <person name="Kimberley A.M."/>
            <person name="King A."/>
            <person name="Knights A."/>
            <person name="Laird G.K."/>
            <person name="Langford C."/>
            <person name="Lawlor S."/>
            <person name="Leongamornlert D.A."/>
            <person name="Leversha M."/>
            <person name="Lloyd C."/>
            <person name="Lloyd D.M."/>
            <person name="Lovell J."/>
            <person name="Martin S."/>
            <person name="Mashreghi-Mohammadi M."/>
            <person name="Matthews L."/>
            <person name="McLaren S."/>
            <person name="McLay K.E."/>
            <person name="McMurray A."/>
            <person name="Milne S."/>
            <person name="Nickerson T."/>
            <person name="Nisbett J."/>
            <person name="Nordsiek G."/>
            <person name="Pearce A.V."/>
            <person name="Peck A.I."/>
            <person name="Porter K.M."/>
            <person name="Pandian R."/>
            <person name="Pelan S."/>
            <person name="Phillimore B."/>
            <person name="Povey S."/>
            <person name="Ramsey Y."/>
            <person name="Rand V."/>
            <person name="Scharfe M."/>
            <person name="Sehra H.K."/>
            <person name="Shownkeen R."/>
            <person name="Sims S.K."/>
            <person name="Skuce C.D."/>
            <person name="Smith M."/>
            <person name="Steward C.A."/>
            <person name="Swarbreck D."/>
            <person name="Sycamore N."/>
            <person name="Tester J."/>
            <person name="Thorpe A."/>
            <person name="Tracey A."/>
            <person name="Tromans A."/>
            <person name="Thomas D.W."/>
            <person name="Wall M."/>
            <person name="Wallis J.M."/>
            <person name="West A.P."/>
            <person name="Whitehead S.L."/>
            <person name="Willey D.L."/>
            <person name="Williams S.A."/>
            <person name="Wilming L."/>
            <person name="Wray P.W."/>
            <person name="Young L."/>
            <person name="Ashurst J.L."/>
            <person name="Coulson A."/>
            <person name="Blocker H."/>
            <person name="Durbin R.M."/>
            <person name="Sulston J.E."/>
            <person name="Hubbard T."/>
            <person name="Jackson M.J."/>
            <person name="Bentley D.R."/>
            <person name="Beck S."/>
            <person name="Rogers J."/>
            <person name="Dunham I."/>
        </authorList>
    </citation>
    <scope>NUCLEOTIDE SEQUENCE [LARGE SCALE GENOMIC DNA]</scope>
</reference>
<reference key="4">
    <citation type="submission" date="2005-07" db="EMBL/GenBank/DDBJ databases">
        <authorList>
            <person name="Mural R.J."/>
            <person name="Istrail S."/>
            <person name="Sutton G.G."/>
            <person name="Florea L."/>
            <person name="Halpern A.L."/>
            <person name="Mobarry C.M."/>
            <person name="Lippert R."/>
            <person name="Walenz B."/>
            <person name="Shatkay H."/>
            <person name="Dew I."/>
            <person name="Miller J.R."/>
            <person name="Flanigan M.J."/>
            <person name="Edwards N.J."/>
            <person name="Bolanos R."/>
            <person name="Fasulo D."/>
            <person name="Halldorsson B.V."/>
            <person name="Hannenhalli S."/>
            <person name="Turner R."/>
            <person name="Yooseph S."/>
            <person name="Lu F."/>
            <person name="Nusskern D.R."/>
            <person name="Shue B.C."/>
            <person name="Zheng X.H."/>
            <person name="Zhong F."/>
            <person name="Delcher A.L."/>
            <person name="Huson D.H."/>
            <person name="Kravitz S.A."/>
            <person name="Mouchard L."/>
            <person name="Reinert K."/>
            <person name="Remington K.A."/>
            <person name="Clark A.G."/>
            <person name="Waterman M.S."/>
            <person name="Eichler E.E."/>
            <person name="Adams M.D."/>
            <person name="Hunkapiller M.W."/>
            <person name="Myers E.W."/>
            <person name="Venter J.C."/>
        </authorList>
    </citation>
    <scope>NUCLEOTIDE SEQUENCE [LARGE SCALE GENOMIC DNA]</scope>
</reference>
<reference key="5">
    <citation type="journal article" date="2004" name="Genome Res.">
        <title>The status, quality, and expansion of the NIH full-length cDNA project: the Mammalian Gene Collection (MGC).</title>
        <authorList>
            <consortium name="The MGC Project Team"/>
        </authorList>
    </citation>
    <scope>NUCLEOTIDE SEQUENCE [LARGE SCALE MRNA] (ISOFORM 2)</scope>
    <source>
        <tissue>Colon</tissue>
    </source>
</reference>
<reference key="6">
    <citation type="journal article" date="1997" name="Gene">
        <title>Chromosomal localization, gene structure and transcription pattern of the ORFX gene, a homologue of the MHC-linked RING3 gene.</title>
        <authorList>
            <person name="Thorpe K.L."/>
            <person name="Gorman P."/>
            <person name="Thomas C."/>
            <person name="Sheer D."/>
            <person name="Trowsdale J."/>
            <person name="Beck S."/>
        </authorList>
    </citation>
    <scope>NUCLEOTIDE SEQUENCE [GENOMIC DNA] OF 363-726</scope>
    <scope>TISSUE SPECIFICITY</scope>
</reference>
<reference key="7">
    <citation type="journal article" date="2008" name="Mol. Cell">
        <title>The double bromodomain proteins Brd2 and Brd3 couple histone acetylation to transcription.</title>
        <authorList>
            <person name="LeRoy G."/>
            <person name="Rickards B."/>
            <person name="Flint S.J."/>
        </authorList>
    </citation>
    <scope>FUNCTION</scope>
    <scope>SUBCELLULAR LOCATION</scope>
    <scope>INTERACTION WITH ACETYLATED CHROMATIN</scope>
</reference>
<reference key="8">
    <citation type="journal article" date="2008" name="Oncogene">
        <title>BRD-NUT oncoproteins: a family of closely related nuclear proteins that block epithelial differentiation and maintain the growth of carcinoma cells.</title>
        <authorList>
            <person name="French C.A."/>
            <person name="Ramirez C.L."/>
            <person name="Kolmakova J."/>
            <person name="Hickman T.T."/>
            <person name="Cameron M.J."/>
            <person name="Thyne M.E."/>
            <person name="Kutok J.L."/>
            <person name="Toretsky J.A."/>
            <person name="Tadavarthy A.K."/>
            <person name="Kees U.R."/>
            <person name="Fletcher J.A."/>
            <person name="Aster J.C."/>
        </authorList>
    </citation>
    <scope>CHROMOSOMAL TRANSLOCATION WITH NUTM1</scope>
</reference>
<reference key="9">
    <citation type="journal article" date="2008" name="Proc. Natl. Acad. Sci. U.S.A.">
        <title>A quantitative atlas of mitotic phosphorylation.</title>
        <authorList>
            <person name="Dephoure N."/>
            <person name="Zhou C."/>
            <person name="Villen J."/>
            <person name="Beausoleil S.A."/>
            <person name="Bakalarski C.E."/>
            <person name="Elledge S.J."/>
            <person name="Gygi S.P."/>
        </authorList>
    </citation>
    <scope>PHOSPHORYLATION [LARGE SCALE ANALYSIS] AT SER-263 AND SER-563</scope>
    <scope>IDENTIFICATION BY MASS SPECTROMETRY [LARGE SCALE ANALYSIS]</scope>
    <source>
        <tissue>Cervix carcinoma</tissue>
    </source>
</reference>
<reference key="10">
    <citation type="journal article" date="2009" name="Anal. Chem.">
        <title>Lys-N and trypsin cover complementary parts of the phosphoproteome in a refined SCX-based approach.</title>
        <authorList>
            <person name="Gauci S."/>
            <person name="Helbig A.O."/>
            <person name="Slijper M."/>
            <person name="Krijgsveld J."/>
            <person name="Heck A.J."/>
            <person name="Mohammed S."/>
        </authorList>
    </citation>
    <scope>ACETYLATION [LARGE SCALE ANALYSIS] AT SER-2</scope>
    <scope>CLEAVAGE OF INITIATOR METHIONINE [LARGE SCALE ANALYSIS]</scope>
    <scope>IDENTIFICATION BY MASS SPECTROMETRY [LARGE SCALE ANALYSIS]</scope>
</reference>
<reference key="11">
    <citation type="journal article" date="2009" name="Sci. Signal.">
        <title>Quantitative phosphoproteomic analysis of T cell receptor signaling reveals system-wide modulation of protein-protein interactions.</title>
        <authorList>
            <person name="Mayya V."/>
            <person name="Lundgren D.H."/>
            <person name="Hwang S.-I."/>
            <person name="Rezaul K."/>
            <person name="Wu L."/>
            <person name="Eng J.K."/>
            <person name="Rodionov V."/>
            <person name="Han D.K."/>
        </authorList>
    </citation>
    <scope>IDENTIFICATION BY MASS SPECTROMETRY [LARGE SCALE ANALYSIS]</scope>
    <source>
        <tissue>Leukemic T-cell</tissue>
    </source>
</reference>
<reference key="12">
    <citation type="journal article" date="2010" name="Nature">
        <title>Selective inhibition of BET bromodomains.</title>
        <authorList>
            <person name="Filippakopoulos P."/>
            <person name="Qi J."/>
            <person name="Picaud S."/>
            <person name="Shen Y."/>
            <person name="Smith W.B."/>
            <person name="Fedorov O."/>
            <person name="Morse E.M."/>
            <person name="Keates T."/>
            <person name="Hickman T.T."/>
            <person name="Felletar I."/>
            <person name="Philpott M."/>
            <person name="Munro S."/>
            <person name="McKeown M.R."/>
            <person name="Wang Y."/>
            <person name="Christie A.L."/>
            <person name="West N."/>
            <person name="Cameron M.J."/>
            <person name="Schwartz B."/>
            <person name="Heightman T.D."/>
            <person name="La Thangue N."/>
            <person name="French C.A."/>
            <person name="Wiest O."/>
            <person name="Kung A.L."/>
            <person name="Knapp S."/>
            <person name="Bradner J.E."/>
        </authorList>
    </citation>
    <scope>ACTIVITY REGULATION</scope>
</reference>
<reference key="13">
    <citation type="journal article" date="2010" name="Sci. Signal.">
        <title>Quantitative phosphoproteomics reveals widespread full phosphorylation site occupancy during mitosis.</title>
        <authorList>
            <person name="Olsen J.V."/>
            <person name="Vermeulen M."/>
            <person name="Santamaria A."/>
            <person name="Kumar C."/>
            <person name="Miller M.L."/>
            <person name="Jensen L.J."/>
            <person name="Gnad F."/>
            <person name="Cox J."/>
            <person name="Jensen T.S."/>
            <person name="Nigg E.A."/>
            <person name="Brunak S."/>
            <person name="Mann M."/>
        </authorList>
    </citation>
    <scope>PHOSPHORYLATION [LARGE SCALE ANALYSIS] AT SER-263</scope>
    <scope>IDENTIFICATION BY MASS SPECTROMETRY [LARGE SCALE ANALYSIS]</scope>
    <source>
        <tissue>Cervix carcinoma</tissue>
    </source>
</reference>
<reference key="14">
    <citation type="journal article" date="2011" name="Sci. Signal.">
        <title>System-wide temporal characterization of the proteome and phosphoproteome of human embryonic stem cell differentiation.</title>
        <authorList>
            <person name="Rigbolt K.T."/>
            <person name="Prokhorova T.A."/>
            <person name="Akimov V."/>
            <person name="Henningsen J."/>
            <person name="Johansen P.T."/>
            <person name="Kratchmarova I."/>
            <person name="Kassem M."/>
            <person name="Mann M."/>
            <person name="Olsen J.V."/>
            <person name="Blagoev B."/>
        </authorList>
    </citation>
    <scope>PHOSPHORYLATION [LARGE SCALE ANALYSIS] AT SER-263 AND SER-563</scope>
    <scope>IDENTIFICATION BY MASS SPECTROMETRY [LARGE SCALE ANALYSIS]</scope>
</reference>
<reference key="15">
    <citation type="journal article" date="2013" name="J. Proteome Res.">
        <title>Toward a comprehensive characterization of a human cancer cell phosphoproteome.</title>
        <authorList>
            <person name="Zhou H."/>
            <person name="Di Palma S."/>
            <person name="Preisinger C."/>
            <person name="Peng M."/>
            <person name="Polat A.N."/>
            <person name="Heck A.J."/>
            <person name="Mohammed S."/>
        </authorList>
    </citation>
    <scope>PHOSPHORYLATION [LARGE SCALE ANALYSIS] AT SER-263</scope>
    <scope>IDENTIFICATION BY MASS SPECTROMETRY [LARGE SCALE ANALYSIS]</scope>
    <source>
        <tissue>Cervix carcinoma</tissue>
        <tissue>Erythroleukemia</tissue>
    </source>
</reference>
<reference key="16">
    <citation type="journal article" date="2014" name="J. Proteomics">
        <title>An enzyme assisted RP-RPLC approach for in-depth analysis of human liver phosphoproteome.</title>
        <authorList>
            <person name="Bian Y."/>
            <person name="Song C."/>
            <person name="Cheng K."/>
            <person name="Dong M."/>
            <person name="Wang F."/>
            <person name="Huang J."/>
            <person name="Sun D."/>
            <person name="Wang L."/>
            <person name="Ye M."/>
            <person name="Zou H."/>
        </authorList>
    </citation>
    <scope>PHOSPHORYLATION [LARGE SCALE ANALYSIS] AT SER-281</scope>
    <scope>IDENTIFICATION BY MASS SPECTROMETRY [LARGE SCALE ANALYSIS]</scope>
    <source>
        <tissue>Liver</tissue>
    </source>
</reference>
<reference key="17">
    <citation type="journal article" date="2015" name="Genes Dev.">
        <title>Screen identifies bromodomain protein ZMYND8 in chromatin recognition of transcription-associated DNA damage that promotes homologous recombination.</title>
        <authorList>
            <person name="Gong F."/>
            <person name="Chiu L.Y."/>
            <person name="Cox B."/>
            <person name="Aymard F."/>
            <person name="Clouaire T."/>
            <person name="Leung J.W."/>
            <person name="Cammarata M."/>
            <person name="Perez M."/>
            <person name="Agarwal P."/>
            <person name="Brodbelt J.S."/>
            <person name="Legube G."/>
            <person name="Miller K.M."/>
        </authorList>
    </citation>
    <scope>SUBCELLULAR LOCATION</scope>
</reference>
<reference key="18">
    <citation type="journal article" date="2017" name="Nat. Struct. Mol. Biol.">
        <title>Site-specific mapping of the human SUMO proteome reveals co-modification with phosphorylation.</title>
        <authorList>
            <person name="Hendriks I.A."/>
            <person name="Lyon D."/>
            <person name="Young C."/>
            <person name="Jensen L.J."/>
            <person name="Vertegaal A.C."/>
            <person name="Nielsen M.L."/>
        </authorList>
    </citation>
    <scope>SUMOYLATION [LARGE SCALE ANALYSIS] AT LYS-414</scope>
    <scope>IDENTIFICATION BY MASS SPECTROMETRY [LARGE SCALE ANALYSIS]</scope>
</reference>
<reference key="19">
    <citation type="journal article" date="2020" name="Nature">
        <title>Selective inhibition of the BD2 bromodomain of BET proteins in prostate cancer.</title>
        <authorList>
            <person name="Faivre E.J."/>
            <person name="McDaniel K.F."/>
            <person name="Albert D.H."/>
            <person name="Mantena S.R."/>
            <person name="Plotnik J.P."/>
            <person name="Wilcox D."/>
            <person name="Zhang L."/>
            <person name="Bui M.H."/>
            <person name="Sheppard G.S."/>
            <person name="Wang L."/>
            <person name="Sehgal V."/>
            <person name="Lin X."/>
            <person name="Huang X."/>
            <person name="Lu X."/>
            <person name="Uziel T."/>
            <person name="Hessler P."/>
            <person name="Lam L.T."/>
            <person name="Bellin R.J."/>
            <person name="Mehta G."/>
            <person name="Fidanze S."/>
            <person name="Pratt J.K."/>
            <person name="Liu D."/>
            <person name="Hasvold L.A."/>
            <person name="Sun C."/>
            <person name="Panchal S.C."/>
            <person name="Nicolette J.J."/>
            <person name="Fossey S.L."/>
            <person name="Park C.H."/>
            <person name="Longenecker K."/>
            <person name="Bigelow L."/>
            <person name="Torrent M."/>
            <person name="Rosenberg S.H."/>
            <person name="Kati W.M."/>
            <person name="Shen Y."/>
        </authorList>
    </citation>
    <scope>ACTIVITY REGULATION</scope>
</reference>
<reference key="20">
    <citation type="journal article" date="2020" name="Nat. Cell Biol.">
        <title>lncRNA DIGIT and BRD3 protein form phase-separated condensates to regulate endoderm differentiation.</title>
        <authorList>
            <person name="Daneshvar K."/>
            <person name="Ardehali M.B."/>
            <person name="Klein I.A."/>
            <person name="Hsieh F.K."/>
            <person name="Kratkiewicz A.J."/>
            <person name="Mahpour A."/>
            <person name="Cancelliere S.O.L."/>
            <person name="Zhou C."/>
            <person name="Cook B.M."/>
            <person name="Li W."/>
            <person name="Pondick J.V."/>
            <person name="Gupta S.K."/>
            <person name="Moran S.P."/>
            <person name="Young R.A."/>
            <person name="Kingston R.E."/>
            <person name="Mullen A.C."/>
        </authorList>
    </citation>
    <scope>FUNCTION</scope>
</reference>
<reference key="21">
    <citation type="journal article" date="2020" name="Science">
        <title>Selective targeting of BD1 and BD2 of the BET proteins in cancer and immunoinflammation.</title>
        <authorList>
            <person name="Gilan O."/>
            <person name="Rioja I."/>
            <person name="Knezevic K."/>
            <person name="Bell M.J."/>
            <person name="Yeung M.M."/>
            <person name="Harker N.R."/>
            <person name="Lam E.Y.N."/>
            <person name="Chung C.W."/>
            <person name="Bamborough P."/>
            <person name="Petretich M."/>
            <person name="Urh M."/>
            <person name="Atkinson S.J."/>
            <person name="Bassil A.K."/>
            <person name="Roberts E.J."/>
            <person name="Vassiliadis D."/>
            <person name="Burr M.L."/>
            <person name="Preston A.G.S."/>
            <person name="Wellaway C."/>
            <person name="Werner T."/>
            <person name="Gray J.R."/>
            <person name="Michon A.M."/>
            <person name="Gobbetti T."/>
            <person name="Kumar V."/>
            <person name="Soden P.E."/>
            <person name="Haynes A."/>
            <person name="Vappiani J."/>
            <person name="Tough D.F."/>
            <person name="Taylor S."/>
            <person name="Dawson S.J."/>
            <person name="Bantscheff M."/>
            <person name="Lindon M."/>
            <person name="Drewes G."/>
            <person name="Demont E.H."/>
            <person name="Daniels D.L."/>
            <person name="Grandi P."/>
            <person name="Prinjha R.K."/>
            <person name="Dawson M.A."/>
        </authorList>
    </citation>
    <scope>ACTIVITY REGULATION</scope>
</reference>
<reference key="22">
    <citation type="submission" date="2009-02" db="PDB data bank">
        <title>Solution structure of the first and second bromodomain from human bromodomain containing protein 3.</title>
        <authorList>
            <consortium name="RIKEN structural genomics initiative (RSGI)"/>
        </authorList>
    </citation>
    <scope>STRUCTURE BY NMR OF 25-415</scope>
</reference>
<reference key="23">
    <citation type="journal article" date="2012" name="Cell">
        <title>Histone recognition and large-scale structural analysis of the human bromodomain family.</title>
        <authorList>
            <person name="Filippakopoulos P."/>
            <person name="Picaud S."/>
            <person name="Mangos M."/>
            <person name="Keates T."/>
            <person name="Lambert J.P."/>
            <person name="Barsyte-Lovejoy D."/>
            <person name="Felletar I."/>
            <person name="Volkmer R."/>
            <person name="Muller S."/>
            <person name="Pawson T."/>
            <person name="Gingras A.C."/>
            <person name="Arrowsmith C.H."/>
            <person name="Knapp S."/>
        </authorList>
    </citation>
    <scope>X-RAY CRYSTALLOGRAPHY (1.36 ANGSTROMS) OF 24-416</scope>
    <scope>FUNCTION</scope>
    <scope>SUBUNIT</scope>
    <scope>DOMAIN</scope>
</reference>
<reference key="24">
    <citation type="journal article" date="2016" name="Mol. Cell">
        <title>Molecular coupling of histone crotonylation and active transcription by AF9 YEATS domain.</title>
        <authorList>
            <person name="Li Y."/>
            <person name="Sabari B.R."/>
            <person name="Panchenko T."/>
            <person name="Wen H."/>
            <person name="Zhao D."/>
            <person name="Guan H."/>
            <person name="Wan L."/>
            <person name="Huang H."/>
            <person name="Tang Z."/>
            <person name="Zhao Y."/>
            <person name="Roeder R.G."/>
            <person name="Shi X."/>
            <person name="Allis C.D."/>
            <person name="Li H."/>
        </authorList>
    </citation>
    <scope>X-RAY CRYSTALLOGRAPHY (2.60 ANGSTROMS) OF 307-416 IN COMPLEX WITH ACETYLATED HISTONE H3 PEPTIDE</scope>
    <scope>FUNCTION</scope>
    <scope>DOMAIN</scope>
</reference>
<reference evidence="24 25" key="25">
    <citation type="journal article" date="2018" name="J. Biol. Chem.">
        <title>The BRD3 ET domain recognizes a short peptide motif through a mechanism that is conserved across chromatin remodelers and transcriptional regulators.</title>
        <authorList>
            <person name="Wai D.C.C."/>
            <person name="Szyszka T.N."/>
            <person name="Campbell A.E."/>
            <person name="Kwong C."/>
            <person name="Wilkinson-White L.E."/>
            <person name="Silva A.P.G."/>
            <person name="Low J.K.K."/>
            <person name="Kwan A.H."/>
            <person name="Gamsjaeger R."/>
            <person name="Chalmers J.D."/>
            <person name="Patrick W.M."/>
            <person name="Lu B."/>
            <person name="Vakoc C.R."/>
            <person name="Blobel G.A."/>
            <person name="Mackay J.P."/>
        </authorList>
    </citation>
    <scope>STRUCTURE BY NMR OF 557-644 IN COMPLEX WITH CHD4 AND SMARCA4</scope>
    <scope>FUNCTION</scope>
    <scope>DOMAIN</scope>
    <scope>INTERACTION WITH CHD4; NSD3 AND SMARCA4</scope>
</reference>
<reference evidence="26 27 28 29" key="26">
    <citation type="journal article" date="2021" name="Structure">
        <title>A common binding motif in the ET domain of BRD3 forms polymorphic structural interfaces with host and viral proteins.</title>
        <authorList>
            <person name="Aiyer S."/>
            <person name="Swapna G.V.T."/>
            <person name="Ma L.C."/>
            <person name="Liu G."/>
            <person name="Hao J."/>
            <person name="Chalmers G."/>
            <person name="Jacobs B.C."/>
            <person name="Montelione G.T."/>
            <person name="Roth M.J."/>
        </authorList>
    </citation>
    <scope>STRUCTURE BY NMR OF 554-640 IN COMPLEX WITH NSD3</scope>
    <scope>INTERACTION WITH NSD3</scope>
    <scope>INTERACTION WITH INTEGRASE PROTEIN OF MLV VIRUS (MICROBIAL INFECTION)</scope>
</reference>
<reference key="27">
    <citation type="journal article" date="2007" name="Nature">
        <title>Patterns of somatic mutation in human cancer genomes.</title>
        <authorList>
            <person name="Greenman C."/>
            <person name="Stephens P."/>
            <person name="Smith R."/>
            <person name="Dalgliesh G.L."/>
            <person name="Hunter C."/>
            <person name="Bignell G."/>
            <person name="Davies H."/>
            <person name="Teague J."/>
            <person name="Butler A."/>
            <person name="Stevens C."/>
            <person name="Edkins S."/>
            <person name="O'Meara S."/>
            <person name="Vastrik I."/>
            <person name="Schmidt E.E."/>
            <person name="Avis T."/>
            <person name="Barthorpe S."/>
            <person name="Bhamra G."/>
            <person name="Buck G."/>
            <person name="Choudhury B."/>
            <person name="Clements J."/>
            <person name="Cole J."/>
            <person name="Dicks E."/>
            <person name="Forbes S."/>
            <person name="Gray K."/>
            <person name="Halliday K."/>
            <person name="Harrison R."/>
            <person name="Hills K."/>
            <person name="Hinton J."/>
            <person name="Jenkinson A."/>
            <person name="Jones D."/>
            <person name="Menzies A."/>
            <person name="Mironenko T."/>
            <person name="Perry J."/>
            <person name="Raine K."/>
            <person name="Richardson D."/>
            <person name="Shepherd R."/>
            <person name="Small A."/>
            <person name="Tofts C."/>
            <person name="Varian J."/>
            <person name="Webb T."/>
            <person name="West S."/>
            <person name="Widaa S."/>
            <person name="Yates A."/>
            <person name="Cahill D.P."/>
            <person name="Louis D.N."/>
            <person name="Goldstraw P."/>
            <person name="Nicholson A.G."/>
            <person name="Brasseur F."/>
            <person name="Looijenga L."/>
            <person name="Weber B.L."/>
            <person name="Chiew Y.-E."/>
            <person name="DeFazio A."/>
            <person name="Greaves M.F."/>
            <person name="Green A.R."/>
            <person name="Campbell P."/>
            <person name="Birney E."/>
            <person name="Easton D.F."/>
            <person name="Chenevix-Trench G."/>
            <person name="Tan M.-H."/>
            <person name="Khoo S.K."/>
            <person name="Teh B.T."/>
            <person name="Yuen S.T."/>
            <person name="Leung S.Y."/>
            <person name="Wooster R."/>
            <person name="Futreal P.A."/>
            <person name="Stratton M.R."/>
        </authorList>
    </citation>
    <scope>VARIANTS [LARGE SCALE ANALYSIS] ASN-36; THR-161; VAL-172; GLN-435; HIS-441 AND PRO-447</scope>
</reference>
<protein>
    <recommendedName>
        <fullName>Bromodomain-containing protein 3</fullName>
    </recommendedName>
    <alternativeName>
        <fullName>RING3-like protein</fullName>
    </alternativeName>
</protein>
<accession>Q15059</accession>
<accession>B1APD9</accession>
<accession>Q4G5Y3</accession>
<accession>Q5T1R7</accession>
<accession>Q8N5M3</accession>
<accession>Q92645</accession>
<sequence>MSTATTVAPAGIPATPGPVNPPPPEVSNPSKPGRKTNQLQYMQNVVVKTLWKHQFAWPFYQPVDAIKLNLPDYHKIIKNPMDMGTIKKRLENNYYWSASECMQDFNTMFTNCYIYNKPTDDIVLMAQALEKIFLQKVAQMPQEEVELLPPAPKGKGRKPAAGAQSAGTQQVAAVSSVSPATPFQSVPPTVSQTPVIAATPVPTITANVTSVPVPPAAAPPPPATPIVPVVPPTPPVVKKKGVKRKADTTTPTTSAITASRSESPPPLSDPKQAKVVARRESGGRPIKPPKKDLEDGEVPQHAGKKGKLSEHLRYCDSILREMLSKKHAAYAWPFYKPVDAEALELHDYHDIIKHPMDLSTVKRKMDGREYPDAQGFAADVRLMFSNCYKYNPPDHEVVAMARKLQDVFEMRFAKMPDEPVEAPALPAPAAPMVSKGAESSRSSEESSSDSGSSDSEEERATRLAELQEQLKAVHEQLAALSQAPVNKPKKKKEKKEKEKKKKDKEKEKEKHKVKAEEEKKAKVAPPAKQAQQKKAPAKKANSTTTAGRQLKKGGKQASASYDSEEEEEGLPMSYDEKRQLSLDINRLPGEKLGRVVHIIQSREPSLRDSNPDEIEIDFETLKPTTLRELERYVKSCLQKKQRKPFSASGKKQAAKSKEELAQEKKKELEKRLQDVSGQLSSSKKPARKEKPGSAPSGGPSRLSSSSSSESGSSSSSGSSSDSSDSE</sequence>
<feature type="initiator methionine" description="Removed" evidence="31">
    <location>
        <position position="1"/>
    </location>
</feature>
<feature type="chain" id="PRO_0000211181" description="Bromodomain-containing protein 3">
    <location>
        <begin position="2"/>
        <end position="726"/>
    </location>
</feature>
<feature type="domain" description="Bromo 1" evidence="3">
    <location>
        <begin position="34"/>
        <end position="140"/>
    </location>
</feature>
<feature type="domain" description="Bromo 2" evidence="3">
    <location>
        <begin position="306"/>
        <end position="415"/>
    </location>
</feature>
<feature type="domain" description="NET" evidence="4">
    <location>
        <begin position="562"/>
        <end position="644"/>
    </location>
</feature>
<feature type="region of interest" description="Disordered" evidence="5">
    <location>
        <begin position="1"/>
        <end position="35"/>
    </location>
</feature>
<feature type="region of interest" description="Acetylated histone H3 binding" evidence="12">
    <location>
        <begin position="78"/>
        <end position="80"/>
    </location>
</feature>
<feature type="region of interest" description="Disordered" evidence="5">
    <location>
        <begin position="149"/>
        <end position="169"/>
    </location>
</feature>
<feature type="region of interest" description="Disordered" evidence="5">
    <location>
        <begin position="237"/>
        <end position="305"/>
    </location>
</feature>
<feature type="region of interest" description="Disordered" evidence="5">
    <location>
        <begin position="421"/>
        <end position="462"/>
    </location>
</feature>
<feature type="region of interest" description="Disordered" evidence="5">
    <location>
        <begin position="477"/>
        <end position="575"/>
    </location>
</feature>
<feature type="region of interest" description="Disordered" evidence="5">
    <location>
        <begin position="637"/>
        <end position="726"/>
    </location>
</feature>
<feature type="coiled-coil region" evidence="2">
    <location>
        <begin position="453"/>
        <end position="524"/>
    </location>
</feature>
<feature type="coiled-coil region" evidence="2">
    <location>
        <begin position="645"/>
        <end position="684"/>
    </location>
</feature>
<feature type="compositionally biased region" description="Pro residues" evidence="5">
    <location>
        <begin position="15"/>
        <end position="26"/>
    </location>
</feature>
<feature type="compositionally biased region" description="Low complexity" evidence="5">
    <location>
        <begin position="248"/>
        <end position="261"/>
    </location>
</feature>
<feature type="compositionally biased region" description="Basic residues" evidence="5">
    <location>
        <begin position="487"/>
        <end position="503"/>
    </location>
</feature>
<feature type="compositionally biased region" description="Basic and acidic residues" evidence="5">
    <location>
        <begin position="504"/>
        <end position="521"/>
    </location>
</feature>
<feature type="compositionally biased region" description="Low complexity" evidence="5">
    <location>
        <begin position="523"/>
        <end position="540"/>
    </location>
</feature>
<feature type="compositionally biased region" description="Basic and acidic residues" evidence="5">
    <location>
        <begin position="655"/>
        <end position="673"/>
    </location>
</feature>
<feature type="compositionally biased region" description="Low complexity" evidence="5">
    <location>
        <begin position="692"/>
        <end position="726"/>
    </location>
</feature>
<feature type="site" description="Breakpoint for translocation to form BDR3-NUTM1 fusion protein" evidence="7">
    <location>
        <begin position="647"/>
        <end position="648"/>
    </location>
</feature>
<feature type="modified residue" description="N-acetylserine" evidence="31">
    <location>
        <position position="2"/>
    </location>
</feature>
<feature type="modified residue" description="Phosphoserine" evidence="30 32 33 34">
    <location>
        <position position="263"/>
    </location>
</feature>
<feature type="modified residue" description="Phosphoserine" evidence="35">
    <location>
        <position position="281"/>
    </location>
</feature>
<feature type="modified residue" description="Phosphoserine" evidence="30 33">
    <location>
        <position position="563"/>
    </location>
</feature>
<feature type="cross-link" description="Glycyl lysine isopeptide (Lys-Gly) (interchain with G-Cter in SUMO2)" evidence="36">
    <location>
        <position position="414"/>
    </location>
</feature>
<feature type="splice variant" id="VSP_010247" description="In isoform 2." evidence="19">
    <original>QLKKGGKQ</original>
    <variation>DHFLTCGV</variation>
    <location>
        <begin position="549"/>
        <end position="556"/>
    </location>
</feature>
<feature type="splice variant" id="VSP_010248" description="In isoform 2." evidence="19">
    <location>
        <begin position="557"/>
        <end position="726"/>
    </location>
</feature>
<feature type="sequence variant" id="VAR_041913" description="In a renal clear cell carcinoma sample; somatic mutation." evidence="6">
    <original>T</original>
    <variation>N</variation>
    <location>
        <position position="36"/>
    </location>
</feature>
<feature type="sequence variant" id="VAR_041914" description="In a gastric adenocarcinoma sample; somatic mutation." evidence="6">
    <original>A</original>
    <variation>T</variation>
    <location>
        <position position="161"/>
    </location>
</feature>
<feature type="sequence variant" id="VAR_041915" description="In dbSNP:rs34609592." evidence="6">
    <original>A</original>
    <variation>V</variation>
    <location>
        <position position="172"/>
    </location>
</feature>
<feature type="sequence variant" id="VAR_041916" description="In dbSNP:rs36093130." evidence="6">
    <original>K</original>
    <variation>Q</variation>
    <location>
        <position position="435"/>
    </location>
</feature>
<feature type="sequence variant" id="VAR_041917" description="In dbSNP:rs56017928." evidence="6">
    <original>R</original>
    <variation>H</variation>
    <location>
        <position position="441"/>
    </location>
</feature>
<feature type="sequence variant" id="VAR_041918" description="In dbSNP:rs55754444." evidence="6">
    <original>S</original>
    <variation>P</variation>
    <location>
        <position position="447"/>
    </location>
</feature>
<feature type="strand" evidence="37">
    <location>
        <begin position="29"/>
        <end position="31"/>
    </location>
</feature>
<feature type="helix" evidence="41">
    <location>
        <begin position="37"/>
        <end position="44"/>
    </location>
</feature>
<feature type="helix" evidence="41">
    <location>
        <begin position="46"/>
        <end position="52"/>
    </location>
</feature>
<feature type="helix" evidence="41">
    <location>
        <begin position="57"/>
        <end position="59"/>
    </location>
</feature>
<feature type="turn" evidence="41">
    <location>
        <begin position="65"/>
        <end position="69"/>
    </location>
</feature>
<feature type="helix" evidence="41">
    <location>
        <begin position="73"/>
        <end position="76"/>
    </location>
</feature>
<feature type="helix" evidence="41">
    <location>
        <begin position="83"/>
        <end position="91"/>
    </location>
</feature>
<feature type="helix" evidence="41">
    <location>
        <begin position="98"/>
        <end position="115"/>
    </location>
</feature>
<feature type="helix" evidence="41">
    <location>
        <begin position="121"/>
        <end position="137"/>
    </location>
</feature>
<feature type="helix" evidence="38">
    <location>
        <begin position="310"/>
        <end position="323"/>
    </location>
</feature>
<feature type="helix" evidence="38">
    <location>
        <begin position="325"/>
        <end position="327"/>
    </location>
</feature>
<feature type="helix" evidence="38">
    <location>
        <begin position="328"/>
        <end position="331"/>
    </location>
</feature>
<feature type="helix" evidence="38">
    <location>
        <begin position="332"/>
        <end position="334"/>
    </location>
</feature>
<feature type="turn" evidence="38">
    <location>
        <begin position="340"/>
        <end position="344"/>
    </location>
</feature>
<feature type="helix" evidence="38">
    <location>
        <begin position="348"/>
        <end position="351"/>
    </location>
</feature>
<feature type="helix" evidence="38">
    <location>
        <begin position="358"/>
        <end position="366"/>
    </location>
</feature>
<feature type="helix" evidence="38">
    <location>
        <begin position="373"/>
        <end position="390"/>
    </location>
</feature>
<feature type="helix" evidence="38">
    <location>
        <begin position="396"/>
        <end position="413"/>
    </location>
</feature>
<feature type="helix" evidence="40">
    <location>
        <begin position="558"/>
        <end position="561"/>
    </location>
</feature>
<feature type="helix" evidence="39">
    <location>
        <begin position="567"/>
        <end position="569"/>
    </location>
</feature>
<feature type="helix" evidence="39">
    <location>
        <begin position="574"/>
        <end position="585"/>
    </location>
</feature>
<feature type="helix" evidence="39">
    <location>
        <begin position="589"/>
        <end position="602"/>
    </location>
</feature>
<feature type="helix" evidence="39">
    <location>
        <begin position="604"/>
        <end position="608"/>
    </location>
</feature>
<feature type="strand" evidence="40">
    <location>
        <begin position="611"/>
        <end position="613"/>
    </location>
</feature>
<feature type="strand" evidence="39">
    <location>
        <begin position="615"/>
        <end position="617"/>
    </location>
</feature>
<feature type="turn" evidence="39">
    <location>
        <begin position="618"/>
        <end position="620"/>
    </location>
</feature>
<feature type="helix" evidence="39">
    <location>
        <begin position="623"/>
        <end position="636"/>
    </location>
</feature>
<feature type="turn" evidence="39">
    <location>
        <begin position="640"/>
        <end position="642"/>
    </location>
</feature>
<dbReference type="EMBL" id="D26362">
    <property type="protein sequence ID" value="BAA05393.2"/>
    <property type="status" value="ALT_INIT"/>
    <property type="molecule type" value="mRNA"/>
</dbReference>
<dbReference type="EMBL" id="AY513270">
    <property type="protein sequence ID" value="AAS82952.1"/>
    <property type="molecule type" value="mRNA"/>
</dbReference>
<dbReference type="EMBL" id="AL445931">
    <property type="status" value="NOT_ANNOTATED_CDS"/>
    <property type="molecule type" value="Genomic_DNA"/>
</dbReference>
<dbReference type="EMBL" id="CH471090">
    <property type="protein sequence ID" value="EAW88113.1"/>
    <property type="molecule type" value="Genomic_DNA"/>
</dbReference>
<dbReference type="EMBL" id="CH471090">
    <property type="protein sequence ID" value="EAW88114.1"/>
    <property type="molecule type" value="Genomic_DNA"/>
</dbReference>
<dbReference type="EMBL" id="BC032124">
    <property type="protein sequence ID" value="AAH32124.1"/>
    <property type="molecule type" value="mRNA"/>
</dbReference>
<dbReference type="EMBL" id="Z81330">
    <property type="status" value="NOT_ANNOTATED_CDS"/>
    <property type="molecule type" value="Genomic_DNA"/>
</dbReference>
<dbReference type="CCDS" id="CCDS6980.1">
    <molecule id="Q15059-1"/>
</dbReference>
<dbReference type="RefSeq" id="NP_031397.1">
    <molecule id="Q15059-1"/>
    <property type="nucleotide sequence ID" value="NM_007371.4"/>
</dbReference>
<dbReference type="RefSeq" id="XP_006717354.1">
    <molecule id="Q15059-1"/>
    <property type="nucleotide sequence ID" value="XM_006717291.4"/>
</dbReference>
<dbReference type="RefSeq" id="XP_011517354.1">
    <molecule id="Q15059-1"/>
    <property type="nucleotide sequence ID" value="XM_011519052.3"/>
</dbReference>
<dbReference type="RefSeq" id="XP_047279859.1">
    <molecule id="Q15059-1"/>
    <property type="nucleotide sequence ID" value="XM_047423903.1"/>
</dbReference>
<dbReference type="RefSeq" id="XP_047279860.1">
    <molecule id="Q15059-1"/>
    <property type="nucleotide sequence ID" value="XM_047423904.1"/>
</dbReference>
<dbReference type="RefSeq" id="XP_054219849.1">
    <molecule id="Q15059-1"/>
    <property type="nucleotide sequence ID" value="XM_054363874.1"/>
</dbReference>
<dbReference type="RefSeq" id="XP_054219850.1">
    <molecule id="Q15059-1"/>
    <property type="nucleotide sequence ID" value="XM_054363875.1"/>
</dbReference>
<dbReference type="RefSeq" id="XP_054219851.1">
    <molecule id="Q15059-1"/>
    <property type="nucleotide sequence ID" value="XM_054363876.1"/>
</dbReference>
<dbReference type="RefSeq" id="XP_054219852.1">
    <molecule id="Q15059-1"/>
    <property type="nucleotide sequence ID" value="XM_054363877.1"/>
</dbReference>
<dbReference type="PDB" id="2E7N">
    <property type="method" value="NMR"/>
    <property type="chains" value="A=306-415"/>
</dbReference>
<dbReference type="PDB" id="2NXB">
    <property type="method" value="X-ray"/>
    <property type="resolution" value="1.40 A"/>
    <property type="chains" value="A/B=24-144"/>
</dbReference>
<dbReference type="PDB" id="2OO1">
    <property type="method" value="X-ray"/>
    <property type="resolution" value="1.70 A"/>
    <property type="chains" value="A/B/C/D=307-416"/>
</dbReference>
<dbReference type="PDB" id="2YW5">
    <property type="method" value="NMR"/>
    <property type="chains" value="A=25-155"/>
</dbReference>
<dbReference type="PDB" id="3S91">
    <property type="method" value="X-ray"/>
    <property type="resolution" value="2.06 A"/>
    <property type="chains" value="A=24-144"/>
</dbReference>
<dbReference type="PDB" id="3S92">
    <property type="method" value="X-ray"/>
    <property type="resolution" value="1.36 A"/>
    <property type="chains" value="A=306-416"/>
</dbReference>
<dbReference type="PDB" id="5A7C">
    <property type="method" value="X-ray"/>
    <property type="resolution" value="1.90 A"/>
    <property type="chains" value="A/B/C/D=306-416"/>
</dbReference>
<dbReference type="PDB" id="5HFR">
    <property type="method" value="X-ray"/>
    <property type="resolution" value="1.70 A"/>
    <property type="chains" value="A/B/C/D=306-416"/>
</dbReference>
<dbReference type="PDB" id="5HJC">
    <property type="method" value="X-ray"/>
    <property type="resolution" value="2.60 A"/>
    <property type="chains" value="A=307-416"/>
</dbReference>
<dbReference type="PDB" id="6BGG">
    <property type="method" value="NMR"/>
    <property type="chains" value="B=557-644"/>
</dbReference>
<dbReference type="PDB" id="6BGH">
    <property type="method" value="NMR"/>
    <property type="chains" value="A=557-643"/>
</dbReference>
<dbReference type="PDB" id="6I41">
    <property type="method" value="X-ray"/>
    <property type="resolution" value="1.90 A"/>
    <property type="chains" value="B=245-253"/>
</dbReference>
<dbReference type="PDB" id="6I5P">
    <property type="method" value="X-ray"/>
    <property type="resolution" value="1.81 A"/>
    <property type="chains" value="B/D/F/H=245-253"/>
</dbReference>
<dbReference type="PDB" id="6I68">
    <property type="method" value="X-ray"/>
    <property type="resolution" value="1.85 A"/>
    <property type="chains" value="B/D/F/H=245-253"/>
</dbReference>
<dbReference type="PDB" id="6I7A">
    <property type="method" value="X-ray"/>
    <property type="resolution" value="2.20 A"/>
    <property type="chains" value="B/D/F/H=245-253"/>
</dbReference>
<dbReference type="PDB" id="6QJU">
    <property type="method" value="X-ray"/>
    <property type="resolution" value="1.20 A"/>
    <property type="chains" value="A/B=24-144"/>
</dbReference>
<dbReference type="PDB" id="6U4A">
    <property type="method" value="X-ray"/>
    <property type="resolution" value="1.88 A"/>
    <property type="chains" value="A/B=25-147"/>
</dbReference>
<dbReference type="PDB" id="6ULP">
    <property type="method" value="X-ray"/>
    <property type="resolution" value="2.80 A"/>
    <property type="chains" value="A/B=307-419"/>
</dbReference>
<dbReference type="PDB" id="7JMY">
    <property type="method" value="NMR"/>
    <property type="chains" value="A=554-640"/>
</dbReference>
<dbReference type="PDB" id="7JQ8">
    <property type="method" value="NMR"/>
    <property type="chains" value="A=554-640"/>
</dbReference>
<dbReference type="PDB" id="7JYN">
    <property type="method" value="NMR"/>
    <property type="chains" value="A=554-640"/>
</dbReference>
<dbReference type="PDB" id="7JYZ">
    <property type="method" value="NMR"/>
    <property type="chains" value="B=554-640"/>
</dbReference>
<dbReference type="PDB" id="7L72">
    <property type="method" value="X-ray"/>
    <property type="resolution" value="1.50 A"/>
    <property type="chains" value="A=306-416"/>
</dbReference>
<dbReference type="PDB" id="7L9L">
    <property type="method" value="X-ray"/>
    <property type="resolution" value="1.55 A"/>
    <property type="chains" value="A=306-416"/>
</dbReference>
<dbReference type="PDB" id="7LAY">
    <property type="method" value="X-ray"/>
    <property type="resolution" value="1.45 A"/>
    <property type="chains" value="A/B=24-144"/>
</dbReference>
<dbReference type="PDB" id="7LAZ">
    <property type="method" value="X-ray"/>
    <property type="resolution" value="2.30 A"/>
    <property type="chains" value="A/B=24-144"/>
</dbReference>
<dbReference type="PDB" id="7LB4">
    <property type="method" value="X-ray"/>
    <property type="resolution" value="2.00 A"/>
    <property type="chains" value="A/B=306-416"/>
</dbReference>
<dbReference type="PDB" id="7LBT">
    <property type="method" value="X-ray"/>
    <property type="resolution" value="2.70 A"/>
    <property type="chains" value="A/B/C/D=306-416"/>
</dbReference>
<dbReference type="PDB" id="7R8R">
    <property type="method" value="X-ray"/>
    <property type="resolution" value="1.80 A"/>
    <property type="chains" value="A=24-144"/>
</dbReference>
<dbReference type="PDB" id="7RJK">
    <property type="method" value="X-ray"/>
    <property type="resolution" value="1.85 A"/>
    <property type="chains" value="A/B=24-144"/>
</dbReference>
<dbReference type="PDB" id="7RJL">
    <property type="method" value="X-ray"/>
    <property type="resolution" value="1.50 A"/>
    <property type="chains" value="A/B=24-144"/>
</dbReference>
<dbReference type="PDB" id="7RJM">
    <property type="method" value="X-ray"/>
    <property type="resolution" value="2.10 A"/>
    <property type="chains" value="A/B=24-144"/>
</dbReference>
<dbReference type="PDB" id="7RJN">
    <property type="method" value="X-ray"/>
    <property type="resolution" value="1.95 A"/>
    <property type="chains" value="A/B=24-144"/>
</dbReference>
<dbReference type="PDB" id="7S3P">
    <property type="method" value="X-ray"/>
    <property type="resolution" value="2.89 A"/>
    <property type="chains" value="A/B/C/D/E/F/G/H/I/J/K=306-416"/>
</dbReference>
<dbReference type="PDB" id="7TO7">
    <property type="method" value="X-ray"/>
    <property type="resolution" value="1.93 A"/>
    <property type="chains" value="A/B/D/E=25-147"/>
</dbReference>
<dbReference type="PDB" id="7TO8">
    <property type="method" value="X-ray"/>
    <property type="resolution" value="1.50 A"/>
    <property type="chains" value="A/B=25-147"/>
</dbReference>
<dbReference type="PDB" id="7TO9">
    <property type="method" value="X-ray"/>
    <property type="resolution" value="1.60 A"/>
    <property type="chains" value="A/B=25-147"/>
</dbReference>
<dbReference type="PDB" id="7TOA">
    <property type="method" value="X-ray"/>
    <property type="resolution" value="1.41 A"/>
    <property type="chains" value="A/B=32-147"/>
</dbReference>
<dbReference type="PDB" id="7UG5">
    <property type="method" value="X-ray"/>
    <property type="resolution" value="1.80 A"/>
    <property type="chains" value="A/B/C/D=306-416"/>
</dbReference>
<dbReference type="PDB" id="8B5A">
    <property type="method" value="X-ray"/>
    <property type="resolution" value="1.92 A"/>
    <property type="chains" value="A=307-416"/>
</dbReference>
<dbReference type="PDB" id="8CV5">
    <property type="method" value="X-ray"/>
    <property type="resolution" value="1.47 A"/>
    <property type="chains" value="A=307-419"/>
</dbReference>
<dbReference type="PDBsum" id="2E7N"/>
<dbReference type="PDBsum" id="2NXB"/>
<dbReference type="PDBsum" id="2OO1"/>
<dbReference type="PDBsum" id="2YW5"/>
<dbReference type="PDBsum" id="3S91"/>
<dbReference type="PDBsum" id="3S92"/>
<dbReference type="PDBsum" id="5A7C"/>
<dbReference type="PDBsum" id="5HFR"/>
<dbReference type="PDBsum" id="5HJC"/>
<dbReference type="PDBsum" id="6BGG"/>
<dbReference type="PDBsum" id="6BGH"/>
<dbReference type="PDBsum" id="6I41"/>
<dbReference type="PDBsum" id="6I5P"/>
<dbReference type="PDBsum" id="6I68"/>
<dbReference type="PDBsum" id="6I7A"/>
<dbReference type="PDBsum" id="6QJU"/>
<dbReference type="PDBsum" id="6U4A"/>
<dbReference type="PDBsum" id="6ULP"/>
<dbReference type="PDBsum" id="7JMY"/>
<dbReference type="PDBsum" id="7JQ8"/>
<dbReference type="PDBsum" id="7JYN"/>
<dbReference type="PDBsum" id="7JYZ"/>
<dbReference type="PDBsum" id="7L72"/>
<dbReference type="PDBsum" id="7L9L"/>
<dbReference type="PDBsum" id="7LAY"/>
<dbReference type="PDBsum" id="7LAZ"/>
<dbReference type="PDBsum" id="7LB4"/>
<dbReference type="PDBsum" id="7LBT"/>
<dbReference type="PDBsum" id="7R8R"/>
<dbReference type="PDBsum" id="7RJK"/>
<dbReference type="PDBsum" id="7RJL"/>
<dbReference type="PDBsum" id="7RJM"/>
<dbReference type="PDBsum" id="7RJN"/>
<dbReference type="PDBsum" id="7S3P"/>
<dbReference type="PDBsum" id="7TO7"/>
<dbReference type="PDBsum" id="7TO8"/>
<dbReference type="PDBsum" id="7TO9"/>
<dbReference type="PDBsum" id="7TOA"/>
<dbReference type="PDBsum" id="7UG5"/>
<dbReference type="PDBsum" id="8B5A"/>
<dbReference type="PDBsum" id="8CV5"/>
<dbReference type="SASBDB" id="Q15059"/>
<dbReference type="SMR" id="Q15059"/>
<dbReference type="BioGRID" id="113715">
    <property type="interactions" value="498"/>
</dbReference>
<dbReference type="DIP" id="DIP-39755N"/>
<dbReference type="FunCoup" id="Q15059">
    <property type="interactions" value="2558"/>
</dbReference>
<dbReference type="IntAct" id="Q15059">
    <property type="interactions" value="32"/>
</dbReference>
<dbReference type="MINT" id="Q15059"/>
<dbReference type="STRING" id="9606.ENSP00000305918"/>
<dbReference type="BindingDB" id="Q15059"/>
<dbReference type="ChEMBL" id="CHEMBL1795186"/>
<dbReference type="DrugBank" id="DB19199">
    <property type="generic name" value="ABBV-744"/>
</dbReference>
<dbReference type="GuidetoPHARMACOLOGY" id="2725"/>
<dbReference type="GlyCosmos" id="Q15059">
    <property type="glycosylation" value="5 sites, 1 glycan"/>
</dbReference>
<dbReference type="GlyGen" id="Q15059">
    <property type="glycosylation" value="9 sites, 1 O-linked glycan (6 sites)"/>
</dbReference>
<dbReference type="iPTMnet" id="Q15059"/>
<dbReference type="PhosphoSitePlus" id="Q15059"/>
<dbReference type="BioMuta" id="BRD3"/>
<dbReference type="DMDM" id="12643726"/>
<dbReference type="jPOST" id="Q15059"/>
<dbReference type="MassIVE" id="Q15059"/>
<dbReference type="PaxDb" id="9606-ENSP00000305918"/>
<dbReference type="PeptideAtlas" id="Q15059"/>
<dbReference type="ProteomicsDB" id="60414">
    <molecule id="Q15059-1"/>
</dbReference>
<dbReference type="ProteomicsDB" id="60415">
    <molecule id="Q15059-2"/>
</dbReference>
<dbReference type="Pumba" id="Q15059"/>
<dbReference type="ABCD" id="Q15059">
    <property type="antibodies" value="1 sequenced antibody"/>
</dbReference>
<dbReference type="Antibodypedia" id="31966">
    <property type="antibodies" value="413 antibodies from 34 providers"/>
</dbReference>
<dbReference type="DNASU" id="8019"/>
<dbReference type="Ensembl" id="ENST00000303407.12">
    <molecule id="Q15059-1"/>
    <property type="protein sequence ID" value="ENSP00000305918.6"/>
    <property type="gene ID" value="ENSG00000169925.17"/>
</dbReference>
<dbReference type="Ensembl" id="ENST00000371834.6">
    <molecule id="Q15059-2"/>
    <property type="protein sequence ID" value="ENSP00000360900.2"/>
    <property type="gene ID" value="ENSG00000169925.17"/>
</dbReference>
<dbReference type="GeneID" id="8019"/>
<dbReference type="KEGG" id="hsa:8019"/>
<dbReference type="MANE-Select" id="ENST00000303407.12">
    <property type="protein sequence ID" value="ENSP00000305918.6"/>
    <property type="RefSeq nucleotide sequence ID" value="NM_007371.4"/>
    <property type="RefSeq protein sequence ID" value="NP_031397.1"/>
</dbReference>
<dbReference type="UCSC" id="uc004cew.4">
    <molecule id="Q15059-1"/>
    <property type="organism name" value="human"/>
</dbReference>
<dbReference type="AGR" id="HGNC:1104"/>
<dbReference type="CTD" id="8019"/>
<dbReference type="DisGeNET" id="8019"/>
<dbReference type="GeneCards" id="BRD3"/>
<dbReference type="HGNC" id="HGNC:1104">
    <property type="gene designation" value="BRD3"/>
</dbReference>
<dbReference type="HPA" id="ENSG00000169925">
    <property type="expression patterns" value="Low tissue specificity"/>
</dbReference>
<dbReference type="MalaCards" id="BRD3"/>
<dbReference type="MIM" id="601541">
    <property type="type" value="gene"/>
</dbReference>
<dbReference type="neXtProt" id="NX_Q15059"/>
<dbReference type="OpenTargets" id="ENSG00000169925"/>
<dbReference type="PharmGKB" id="PA25415"/>
<dbReference type="VEuPathDB" id="HostDB:ENSG00000169925"/>
<dbReference type="eggNOG" id="KOG1474">
    <property type="taxonomic scope" value="Eukaryota"/>
</dbReference>
<dbReference type="GeneTree" id="ENSGT00940000153385"/>
<dbReference type="HOGENOM" id="CLU_001499_0_4_1"/>
<dbReference type="InParanoid" id="Q15059"/>
<dbReference type="OMA" id="KMNIPHY"/>
<dbReference type="OrthoDB" id="21449at2759"/>
<dbReference type="PAN-GO" id="Q15059">
    <property type="GO annotations" value="5 GO annotations based on evolutionary models"/>
</dbReference>
<dbReference type="PhylomeDB" id="Q15059"/>
<dbReference type="TreeFam" id="TF317345"/>
<dbReference type="PathwayCommons" id="Q15059"/>
<dbReference type="SignaLink" id="Q15059"/>
<dbReference type="SIGNOR" id="Q15059"/>
<dbReference type="BioGRID-ORCS" id="8019">
    <property type="hits" value="18 hits in 1176 CRISPR screens"/>
</dbReference>
<dbReference type="CD-CODE" id="38EC0B30">
    <property type="entry name" value="Transcriptional condensate"/>
</dbReference>
<dbReference type="ChiTaRS" id="BRD3">
    <property type="organism name" value="human"/>
</dbReference>
<dbReference type="EvolutionaryTrace" id="Q15059"/>
<dbReference type="GeneWiki" id="BRD3"/>
<dbReference type="GenomeRNAi" id="8019"/>
<dbReference type="Pharos" id="Q15059">
    <property type="development level" value="Tchem"/>
</dbReference>
<dbReference type="PRO" id="PR:Q15059"/>
<dbReference type="Proteomes" id="UP000005640">
    <property type="component" value="Chromosome 9"/>
</dbReference>
<dbReference type="RNAct" id="Q15059">
    <property type="molecule type" value="protein"/>
</dbReference>
<dbReference type="Bgee" id="ENSG00000169925">
    <property type="expression patterns" value="Expressed in nipple and 220 other cell types or tissues"/>
</dbReference>
<dbReference type="ExpressionAtlas" id="Q15059">
    <property type="expression patterns" value="baseline and differential"/>
</dbReference>
<dbReference type="GO" id="GO:0000785">
    <property type="term" value="C:chromatin"/>
    <property type="evidence" value="ECO:0000314"/>
    <property type="project" value="UniProt"/>
</dbReference>
<dbReference type="GO" id="GO:0005634">
    <property type="term" value="C:nucleus"/>
    <property type="evidence" value="ECO:0000314"/>
    <property type="project" value="UniProtKB"/>
</dbReference>
<dbReference type="GO" id="GO:0003682">
    <property type="term" value="F:chromatin binding"/>
    <property type="evidence" value="ECO:0000318"/>
    <property type="project" value="GO_Central"/>
</dbReference>
<dbReference type="GO" id="GO:0042393">
    <property type="term" value="F:histone binding"/>
    <property type="evidence" value="ECO:0000318"/>
    <property type="project" value="GO_Central"/>
</dbReference>
<dbReference type="GO" id="GO:0140017">
    <property type="term" value="F:histone H3K18cr reader activity"/>
    <property type="evidence" value="ECO:0000314"/>
    <property type="project" value="UniProtKB"/>
</dbReference>
<dbReference type="GO" id="GO:0140038">
    <property type="term" value="F:histone H3K27cr reader activity"/>
    <property type="evidence" value="ECO:0000314"/>
    <property type="project" value="UniProtKB"/>
</dbReference>
<dbReference type="GO" id="GO:0140019">
    <property type="term" value="F:histone H3K9cr reader activity"/>
    <property type="evidence" value="ECO:0000314"/>
    <property type="project" value="UniProtKB"/>
</dbReference>
<dbReference type="GO" id="GO:0062072">
    <property type="term" value="F:histone H3K9me2/3 reader activity"/>
    <property type="evidence" value="ECO:0000314"/>
    <property type="project" value="UniProtKB"/>
</dbReference>
<dbReference type="GO" id="GO:0106222">
    <property type="term" value="F:lncRNA binding"/>
    <property type="evidence" value="ECO:0000314"/>
    <property type="project" value="UniProtKB"/>
</dbReference>
<dbReference type="GO" id="GO:0070577">
    <property type="term" value="F:lysine-acetylated histone binding"/>
    <property type="evidence" value="ECO:0000314"/>
    <property type="project" value="GO_Central"/>
</dbReference>
<dbReference type="GO" id="GO:0140693">
    <property type="term" value="F:molecular condensate scaffold activity"/>
    <property type="evidence" value="ECO:0000314"/>
    <property type="project" value="UniProtKB"/>
</dbReference>
<dbReference type="GO" id="GO:0004674">
    <property type="term" value="F:protein serine/threonine kinase activity"/>
    <property type="evidence" value="ECO:0000318"/>
    <property type="project" value="GO_Central"/>
</dbReference>
<dbReference type="GO" id="GO:0006338">
    <property type="term" value="P:chromatin remodeling"/>
    <property type="evidence" value="ECO:0000318"/>
    <property type="project" value="GO_Central"/>
</dbReference>
<dbReference type="GO" id="GO:0035987">
    <property type="term" value="P:endodermal cell differentiation"/>
    <property type="evidence" value="ECO:0000314"/>
    <property type="project" value="UniProtKB"/>
</dbReference>
<dbReference type="GO" id="GO:0045944">
    <property type="term" value="P:positive regulation of transcription by RNA polymerase II"/>
    <property type="evidence" value="ECO:0000314"/>
    <property type="project" value="UniProt"/>
</dbReference>
<dbReference type="GO" id="GO:0071168">
    <property type="term" value="P:protein localization to chromatin"/>
    <property type="evidence" value="ECO:0000314"/>
    <property type="project" value="UniProtKB"/>
</dbReference>
<dbReference type="GO" id="GO:0006357">
    <property type="term" value="P:regulation of transcription by RNA polymerase II"/>
    <property type="evidence" value="ECO:0000314"/>
    <property type="project" value="UniProtKB"/>
</dbReference>
<dbReference type="CDD" id="cd05497">
    <property type="entry name" value="Bromo_Brdt_I_like"/>
    <property type="match status" value="1"/>
</dbReference>
<dbReference type="CDD" id="cd05498">
    <property type="entry name" value="Bromo_Brdt_II_like"/>
    <property type="match status" value="1"/>
</dbReference>
<dbReference type="DisProt" id="DP03059"/>
<dbReference type="FunFam" id="1.20.920.10:FF:000003">
    <property type="entry name" value="Bromodomain-containing protein 2"/>
    <property type="match status" value="1"/>
</dbReference>
<dbReference type="FunFam" id="1.20.1270.220:FF:000001">
    <property type="entry name" value="bromodomain-containing protein 2 isoform X1"/>
    <property type="match status" value="1"/>
</dbReference>
<dbReference type="FunFam" id="1.20.920.10:FF:000002">
    <property type="entry name" value="Bromodomain-containing protein 4"/>
    <property type="match status" value="1"/>
</dbReference>
<dbReference type="Gene3D" id="1.20.1270.220">
    <property type="match status" value="1"/>
</dbReference>
<dbReference type="Gene3D" id="1.20.920.10">
    <property type="entry name" value="Bromodomain-like"/>
    <property type="match status" value="2"/>
</dbReference>
<dbReference type="InterPro" id="IPR043508">
    <property type="entry name" value="Bromo_Brdt_I"/>
</dbReference>
<dbReference type="InterPro" id="IPR043509">
    <property type="entry name" value="Bromo_Brdt_II"/>
</dbReference>
<dbReference type="InterPro" id="IPR050935">
    <property type="entry name" value="Bromo_chromatin_reader"/>
</dbReference>
<dbReference type="InterPro" id="IPR001487">
    <property type="entry name" value="Bromodomain"/>
</dbReference>
<dbReference type="InterPro" id="IPR036427">
    <property type="entry name" value="Bromodomain-like_sf"/>
</dbReference>
<dbReference type="InterPro" id="IPR018359">
    <property type="entry name" value="Bromodomain_CS"/>
</dbReference>
<dbReference type="InterPro" id="IPR027353">
    <property type="entry name" value="NET_dom"/>
</dbReference>
<dbReference type="InterPro" id="IPR038336">
    <property type="entry name" value="NET_sf"/>
</dbReference>
<dbReference type="PANTHER" id="PTHR22880:SF246">
    <property type="entry name" value="BROMODOMAIN-CONTAINING PROTEIN 3"/>
    <property type="match status" value="1"/>
</dbReference>
<dbReference type="PANTHER" id="PTHR22880">
    <property type="entry name" value="FALZ-RELATED BROMODOMAIN-CONTAINING PROTEINS"/>
    <property type="match status" value="1"/>
</dbReference>
<dbReference type="Pfam" id="PF17035">
    <property type="entry name" value="BET"/>
    <property type="match status" value="1"/>
</dbReference>
<dbReference type="Pfam" id="PF00439">
    <property type="entry name" value="Bromodomain"/>
    <property type="match status" value="2"/>
</dbReference>
<dbReference type="PRINTS" id="PR00503">
    <property type="entry name" value="BROMODOMAIN"/>
</dbReference>
<dbReference type="SMART" id="SM00297">
    <property type="entry name" value="BROMO"/>
    <property type="match status" value="2"/>
</dbReference>
<dbReference type="SUPFAM" id="SSF47370">
    <property type="entry name" value="Bromodomain"/>
    <property type="match status" value="2"/>
</dbReference>
<dbReference type="PROSITE" id="PS00633">
    <property type="entry name" value="BROMODOMAIN_1"/>
    <property type="match status" value="2"/>
</dbReference>
<dbReference type="PROSITE" id="PS50014">
    <property type="entry name" value="BROMODOMAIN_2"/>
    <property type="match status" value="2"/>
</dbReference>
<dbReference type="PROSITE" id="PS51525">
    <property type="entry name" value="NET"/>
    <property type="match status" value="1"/>
</dbReference>
<evidence type="ECO:0000250" key="1">
    <source>
        <dbReference type="UniProtKB" id="Q8K2F0"/>
    </source>
</evidence>
<evidence type="ECO:0000255" key="2"/>
<evidence type="ECO:0000255" key="3">
    <source>
        <dbReference type="PROSITE-ProRule" id="PRU00035"/>
    </source>
</evidence>
<evidence type="ECO:0000255" key="4">
    <source>
        <dbReference type="PROSITE-ProRule" id="PRU00857"/>
    </source>
</evidence>
<evidence type="ECO:0000256" key="5">
    <source>
        <dbReference type="SAM" id="MobiDB-lite"/>
    </source>
</evidence>
<evidence type="ECO:0000269" key="6">
    <source>
    </source>
</evidence>
<evidence type="ECO:0000269" key="7">
    <source>
    </source>
</evidence>
<evidence type="ECO:0000269" key="8">
    <source>
    </source>
</evidence>
<evidence type="ECO:0000269" key="9">
    <source>
    </source>
</evidence>
<evidence type="ECO:0000269" key="10">
    <source>
    </source>
</evidence>
<evidence type="ECO:0000269" key="11">
    <source>
    </source>
</evidence>
<evidence type="ECO:0000269" key="12">
    <source>
    </source>
</evidence>
<evidence type="ECO:0000269" key="13">
    <source>
    </source>
</evidence>
<evidence type="ECO:0000269" key="14">
    <source>
    </source>
</evidence>
<evidence type="ECO:0000269" key="15">
    <source>
    </source>
</evidence>
<evidence type="ECO:0000269" key="16">
    <source>
    </source>
</evidence>
<evidence type="ECO:0000269" key="17">
    <source>
    </source>
</evidence>
<evidence type="ECO:0000269" key="18">
    <source>
    </source>
</evidence>
<evidence type="ECO:0000303" key="19">
    <source>
    </source>
</evidence>
<evidence type="ECO:0000303" key="20">
    <source>
    </source>
</evidence>
<evidence type="ECO:0000303" key="21">
    <source>
    </source>
</evidence>
<evidence type="ECO:0000305" key="22"/>
<evidence type="ECO:0000312" key="23">
    <source>
        <dbReference type="HGNC" id="HGNC:1104"/>
    </source>
</evidence>
<evidence type="ECO:0007744" key="24">
    <source>
        <dbReference type="PDB" id="6BGG"/>
    </source>
</evidence>
<evidence type="ECO:0007744" key="25">
    <source>
        <dbReference type="PDB" id="6BGH"/>
    </source>
</evidence>
<evidence type="ECO:0007744" key="26">
    <source>
        <dbReference type="PDB" id="7JMY"/>
    </source>
</evidence>
<evidence type="ECO:0007744" key="27">
    <source>
        <dbReference type="PDB" id="7JQ8"/>
    </source>
</evidence>
<evidence type="ECO:0007744" key="28">
    <source>
        <dbReference type="PDB" id="7JYN"/>
    </source>
</evidence>
<evidence type="ECO:0007744" key="29">
    <source>
        <dbReference type="PDB" id="7JYZ"/>
    </source>
</evidence>
<evidence type="ECO:0007744" key="30">
    <source>
    </source>
</evidence>
<evidence type="ECO:0007744" key="31">
    <source>
    </source>
</evidence>
<evidence type="ECO:0007744" key="32">
    <source>
    </source>
</evidence>
<evidence type="ECO:0007744" key="33">
    <source>
    </source>
</evidence>
<evidence type="ECO:0007744" key="34">
    <source>
    </source>
</evidence>
<evidence type="ECO:0007744" key="35">
    <source>
    </source>
</evidence>
<evidence type="ECO:0007744" key="36">
    <source>
    </source>
</evidence>
<evidence type="ECO:0007829" key="37">
    <source>
        <dbReference type="PDB" id="2YW5"/>
    </source>
</evidence>
<evidence type="ECO:0007829" key="38">
    <source>
        <dbReference type="PDB" id="3S92"/>
    </source>
</evidence>
<evidence type="ECO:0007829" key="39">
    <source>
        <dbReference type="PDB" id="6BGG"/>
    </source>
</evidence>
<evidence type="ECO:0007829" key="40">
    <source>
        <dbReference type="PDB" id="6BGH"/>
    </source>
</evidence>
<evidence type="ECO:0007829" key="41">
    <source>
        <dbReference type="PDB" id="6QJU"/>
    </source>
</evidence>